<organism>
    <name type="scientific">Kluyveromyces marxianus</name>
    <name type="common">Yeast</name>
    <name type="synonym">Candida kefyr</name>
    <dbReference type="NCBI Taxonomy" id="4911"/>
    <lineage>
        <taxon>Eukaryota</taxon>
        <taxon>Fungi</taxon>
        <taxon>Dikarya</taxon>
        <taxon>Ascomycota</taxon>
        <taxon>Saccharomycotina</taxon>
        <taxon>Saccharomycetes</taxon>
        <taxon>Saccharomycetales</taxon>
        <taxon>Saccharomycetaceae</taxon>
        <taxon>Kluyveromyces</taxon>
    </lineage>
</organism>
<comment type="function">
    <text evidence="1">Histone H3-like nucleosomal protein that is specifically found in centromeric nucleosomes. Replaces conventional H3 in the nucleosome core of centromeric chromatin that serves as an assembly site for the inner kinetochore. Required for recruitment and assembly of kinetochore proteins, mitotic progression and chromosome segregation. May serve as an epigenetic mark that propagates centromere identity through replication and cell division (By similarity).</text>
</comment>
<comment type="subunit">
    <text evidence="1">Component of centromeric nucleosomes, where DNA is wrapped around a histone octamer core. The octamer contains two molecules each of H2A, H2B, CSE4/CENPA and H4 assembled in one CSE4-H4 heterotetramer and two H2A-H2B heterodimers. Interacts with the inner kinetochore.</text>
</comment>
<comment type="subcellular location">
    <subcellularLocation>
        <location evidence="1">Nucleus</location>
    </subcellularLocation>
    <subcellularLocation>
        <location evidence="1">Chromosome</location>
        <location evidence="1">Centromere</location>
    </subcellularLocation>
</comment>
<comment type="PTM">
    <text evidence="1">Ubiquitinated. Is degraded through ubiquitin-mediated proteolysis when not protected by its association to the kinetochore.</text>
</comment>
<comment type="similarity">
    <text evidence="2">Belongs to the histone H3 family.</text>
</comment>
<gene>
    <name type="primary">CSE4</name>
</gene>
<evidence type="ECO:0000250" key="1">
    <source>
        <dbReference type="UniProtKB" id="P36012"/>
    </source>
</evidence>
<evidence type="ECO:0000305" key="2"/>
<sequence length="192" mass="22435">MEQSVRSIDGARSVAGAGRTIIDRESINQRALQLLQRNRQRRLLLKRSEDRARYIPERREQKRELDETLETRNVPQHHISAHERITKAKSHGSKYKPSDLALAEIRKYQRSTDLLISRMPFARLVKEVTDQFASDEEPLRWQSMAIMALQEASEAYLVGLLEHTNLLALHAKRITIMRKDMQLARRIRGQFI</sequence>
<accession>Q0MTC0</accession>
<reference key="1">
    <citation type="submission" date="2006-07" db="EMBL/GenBank/DDBJ databases">
        <title>Phylogenetic analysis of fungal cenH3 proteins.</title>
        <authorList>
            <person name="Baker R.E."/>
            <person name="Rogers K."/>
        </authorList>
    </citation>
    <scope>NUCLEOTIDE SEQUENCE [GENOMIC DNA]</scope>
    <source>
        <strain>ARSCC Y-8281</strain>
    </source>
</reference>
<proteinExistence type="inferred from homology"/>
<name>CENPA_KLUMA</name>
<protein>
    <recommendedName>
        <fullName>Histone H3-like centromeric protein CSE4</fullName>
    </recommendedName>
    <alternativeName>
        <fullName>CENP-A homolog</fullName>
    </alternativeName>
    <alternativeName>
        <fullName evidence="2">CENPA homolog</fullName>
    </alternativeName>
</protein>
<dbReference type="EMBL" id="DQ846848">
    <property type="protein sequence ID" value="ABH11662.1"/>
    <property type="molecule type" value="Genomic_DNA"/>
</dbReference>
<dbReference type="SMR" id="Q0MTC0"/>
<dbReference type="VEuPathDB" id="FungiDB:KLMA_80263"/>
<dbReference type="OrthoDB" id="39714at4893"/>
<dbReference type="GO" id="GO:0000775">
    <property type="term" value="C:chromosome, centromeric region"/>
    <property type="evidence" value="ECO:0007669"/>
    <property type="project" value="UniProtKB-SubCell"/>
</dbReference>
<dbReference type="GO" id="GO:0000786">
    <property type="term" value="C:nucleosome"/>
    <property type="evidence" value="ECO:0007669"/>
    <property type="project" value="UniProtKB-KW"/>
</dbReference>
<dbReference type="GO" id="GO:0005634">
    <property type="term" value="C:nucleus"/>
    <property type="evidence" value="ECO:0007669"/>
    <property type="project" value="UniProtKB-SubCell"/>
</dbReference>
<dbReference type="GO" id="GO:0003677">
    <property type="term" value="F:DNA binding"/>
    <property type="evidence" value="ECO:0007669"/>
    <property type="project" value="UniProtKB-KW"/>
</dbReference>
<dbReference type="GO" id="GO:0046982">
    <property type="term" value="F:protein heterodimerization activity"/>
    <property type="evidence" value="ECO:0007669"/>
    <property type="project" value="InterPro"/>
</dbReference>
<dbReference type="GO" id="GO:0030527">
    <property type="term" value="F:structural constituent of chromatin"/>
    <property type="evidence" value="ECO:0007669"/>
    <property type="project" value="InterPro"/>
</dbReference>
<dbReference type="CDD" id="cd22911">
    <property type="entry name" value="HFD_H3"/>
    <property type="match status" value="1"/>
</dbReference>
<dbReference type="FunFam" id="1.10.20.10:FF:000102">
    <property type="entry name" value="Histone H3-like centromeric protein CSE4"/>
    <property type="match status" value="1"/>
</dbReference>
<dbReference type="Gene3D" id="1.10.20.10">
    <property type="entry name" value="Histone, subunit A"/>
    <property type="match status" value="1"/>
</dbReference>
<dbReference type="InterPro" id="IPR009072">
    <property type="entry name" value="Histone-fold"/>
</dbReference>
<dbReference type="InterPro" id="IPR007125">
    <property type="entry name" value="Histone_H2A/H2B/H3"/>
</dbReference>
<dbReference type="InterPro" id="IPR000164">
    <property type="entry name" value="Histone_H3/CENP-A"/>
</dbReference>
<dbReference type="PANTHER" id="PTHR45810:SF17">
    <property type="entry name" value="HISTONE H3-LIKE CENTROMERIC PROTEIN A"/>
    <property type="match status" value="1"/>
</dbReference>
<dbReference type="PANTHER" id="PTHR45810">
    <property type="entry name" value="HISTONE H3.2"/>
    <property type="match status" value="1"/>
</dbReference>
<dbReference type="Pfam" id="PF00125">
    <property type="entry name" value="Histone"/>
    <property type="match status" value="1"/>
</dbReference>
<dbReference type="PRINTS" id="PR00622">
    <property type="entry name" value="HISTONEH3"/>
</dbReference>
<dbReference type="SMART" id="SM00428">
    <property type="entry name" value="H3"/>
    <property type="match status" value="1"/>
</dbReference>
<dbReference type="SUPFAM" id="SSF47113">
    <property type="entry name" value="Histone-fold"/>
    <property type="match status" value="1"/>
</dbReference>
<dbReference type="PROSITE" id="PS00959">
    <property type="entry name" value="HISTONE_H3_2"/>
    <property type="match status" value="1"/>
</dbReference>
<keyword id="KW-0137">Centromere</keyword>
<keyword id="KW-0158">Chromosome</keyword>
<keyword id="KW-0238">DNA-binding</keyword>
<keyword id="KW-0544">Nucleosome core</keyword>
<keyword id="KW-0539">Nucleus</keyword>
<keyword id="KW-0832">Ubl conjugation</keyword>
<feature type="chain" id="PRO_0000270599" description="Histone H3-like centromeric protein CSE4">
    <location>
        <begin position="1"/>
        <end position="192"/>
    </location>
</feature>
<feature type="region of interest" description="H3-like">
    <location>
        <begin position="88"/>
        <end position="190"/>
    </location>
</feature>